<feature type="chain" id="PRO_1000054930" description="Small ribosomal subunit protein uS17">
    <location>
        <begin position="1"/>
        <end position="90"/>
    </location>
</feature>
<dbReference type="EMBL" id="CP000614">
    <property type="protein sequence ID" value="ABO53352.1"/>
    <property type="molecule type" value="Genomic_DNA"/>
</dbReference>
<dbReference type="SMR" id="A4JAP9"/>
<dbReference type="KEGG" id="bvi:Bcep1808_0339"/>
<dbReference type="eggNOG" id="COG0186">
    <property type="taxonomic scope" value="Bacteria"/>
</dbReference>
<dbReference type="HOGENOM" id="CLU_073626_1_1_4"/>
<dbReference type="Proteomes" id="UP000002287">
    <property type="component" value="Chromosome 1"/>
</dbReference>
<dbReference type="GO" id="GO:0022627">
    <property type="term" value="C:cytosolic small ribosomal subunit"/>
    <property type="evidence" value="ECO:0007669"/>
    <property type="project" value="TreeGrafter"/>
</dbReference>
<dbReference type="GO" id="GO:0019843">
    <property type="term" value="F:rRNA binding"/>
    <property type="evidence" value="ECO:0007669"/>
    <property type="project" value="UniProtKB-UniRule"/>
</dbReference>
<dbReference type="GO" id="GO:0003735">
    <property type="term" value="F:structural constituent of ribosome"/>
    <property type="evidence" value="ECO:0007669"/>
    <property type="project" value="InterPro"/>
</dbReference>
<dbReference type="GO" id="GO:0006412">
    <property type="term" value="P:translation"/>
    <property type="evidence" value="ECO:0007669"/>
    <property type="project" value="UniProtKB-UniRule"/>
</dbReference>
<dbReference type="CDD" id="cd00364">
    <property type="entry name" value="Ribosomal_uS17"/>
    <property type="match status" value="1"/>
</dbReference>
<dbReference type="Gene3D" id="2.40.50.140">
    <property type="entry name" value="Nucleic acid-binding proteins"/>
    <property type="match status" value="1"/>
</dbReference>
<dbReference type="HAMAP" id="MF_01345_B">
    <property type="entry name" value="Ribosomal_uS17_B"/>
    <property type="match status" value="1"/>
</dbReference>
<dbReference type="InterPro" id="IPR012340">
    <property type="entry name" value="NA-bd_OB-fold"/>
</dbReference>
<dbReference type="InterPro" id="IPR000266">
    <property type="entry name" value="Ribosomal_uS17"/>
</dbReference>
<dbReference type="InterPro" id="IPR019984">
    <property type="entry name" value="Ribosomal_uS17_bact/chlr"/>
</dbReference>
<dbReference type="InterPro" id="IPR019979">
    <property type="entry name" value="Ribosomal_uS17_CS"/>
</dbReference>
<dbReference type="NCBIfam" id="NF004123">
    <property type="entry name" value="PRK05610.1"/>
    <property type="match status" value="1"/>
</dbReference>
<dbReference type="NCBIfam" id="TIGR03635">
    <property type="entry name" value="uS17_bact"/>
    <property type="match status" value="1"/>
</dbReference>
<dbReference type="PANTHER" id="PTHR10744">
    <property type="entry name" value="40S RIBOSOMAL PROTEIN S11 FAMILY MEMBER"/>
    <property type="match status" value="1"/>
</dbReference>
<dbReference type="PANTHER" id="PTHR10744:SF1">
    <property type="entry name" value="SMALL RIBOSOMAL SUBUNIT PROTEIN US17M"/>
    <property type="match status" value="1"/>
</dbReference>
<dbReference type="Pfam" id="PF00366">
    <property type="entry name" value="Ribosomal_S17"/>
    <property type="match status" value="1"/>
</dbReference>
<dbReference type="PRINTS" id="PR00973">
    <property type="entry name" value="RIBOSOMALS17"/>
</dbReference>
<dbReference type="SUPFAM" id="SSF50249">
    <property type="entry name" value="Nucleic acid-binding proteins"/>
    <property type="match status" value="1"/>
</dbReference>
<dbReference type="PROSITE" id="PS00056">
    <property type="entry name" value="RIBOSOMAL_S17"/>
    <property type="match status" value="1"/>
</dbReference>
<name>RS17_BURVG</name>
<protein>
    <recommendedName>
        <fullName evidence="1">Small ribosomal subunit protein uS17</fullName>
    </recommendedName>
    <alternativeName>
        <fullName evidence="2">30S ribosomal protein S17</fullName>
    </alternativeName>
</protein>
<accession>A4JAP9</accession>
<proteinExistence type="inferred from homology"/>
<organism>
    <name type="scientific">Burkholderia vietnamiensis (strain G4 / LMG 22486)</name>
    <name type="common">Burkholderia cepacia (strain R1808)</name>
    <dbReference type="NCBI Taxonomy" id="269482"/>
    <lineage>
        <taxon>Bacteria</taxon>
        <taxon>Pseudomonadati</taxon>
        <taxon>Pseudomonadota</taxon>
        <taxon>Betaproteobacteria</taxon>
        <taxon>Burkholderiales</taxon>
        <taxon>Burkholderiaceae</taxon>
        <taxon>Burkholderia</taxon>
        <taxon>Burkholderia cepacia complex</taxon>
    </lineage>
</organism>
<reference key="1">
    <citation type="submission" date="2007-03" db="EMBL/GenBank/DDBJ databases">
        <title>Complete sequence of chromosome 1 of Burkholderia vietnamiensis G4.</title>
        <authorList>
            <consortium name="US DOE Joint Genome Institute"/>
            <person name="Copeland A."/>
            <person name="Lucas S."/>
            <person name="Lapidus A."/>
            <person name="Barry K."/>
            <person name="Detter J.C."/>
            <person name="Glavina del Rio T."/>
            <person name="Hammon N."/>
            <person name="Israni S."/>
            <person name="Dalin E."/>
            <person name="Tice H."/>
            <person name="Pitluck S."/>
            <person name="Chain P."/>
            <person name="Malfatti S."/>
            <person name="Shin M."/>
            <person name="Vergez L."/>
            <person name="Schmutz J."/>
            <person name="Larimer F."/>
            <person name="Land M."/>
            <person name="Hauser L."/>
            <person name="Kyrpides N."/>
            <person name="Tiedje J."/>
            <person name="Richardson P."/>
        </authorList>
    </citation>
    <scope>NUCLEOTIDE SEQUENCE [LARGE SCALE GENOMIC DNA]</scope>
    <source>
        <strain>G4 / LMG 22486</strain>
    </source>
</reference>
<gene>
    <name evidence="1" type="primary">rpsQ</name>
    <name type="ordered locus">Bcep1808_0339</name>
</gene>
<comment type="function">
    <text evidence="1">One of the primary rRNA binding proteins, it binds specifically to the 5'-end of 16S ribosomal RNA.</text>
</comment>
<comment type="subunit">
    <text evidence="1">Part of the 30S ribosomal subunit.</text>
</comment>
<comment type="similarity">
    <text evidence="1">Belongs to the universal ribosomal protein uS17 family.</text>
</comment>
<evidence type="ECO:0000255" key="1">
    <source>
        <dbReference type="HAMAP-Rule" id="MF_01345"/>
    </source>
</evidence>
<evidence type="ECO:0000305" key="2"/>
<sequence>MNDSVKTSLKRTLVGRVVSNKMDKTVTVLIEHRVKHPIYGKYVVRSKKYHAHDEANTCNEGDLVEIQETRPVSKTKAWTVSRLVEAARVI</sequence>
<keyword id="KW-0687">Ribonucleoprotein</keyword>
<keyword id="KW-0689">Ribosomal protein</keyword>
<keyword id="KW-0694">RNA-binding</keyword>
<keyword id="KW-0699">rRNA-binding</keyword>